<feature type="chain" id="PRO_0000221644" description="Uncharacterized protein DR_B0040">
    <location>
        <begin position="1"/>
        <end position="145"/>
    </location>
</feature>
<gene>
    <name type="ordered locus">DR_B0040</name>
</gene>
<sequence length="145" mass="15152">MAFRTPLFSLVTLSALLSMAPARAAAPALTPPTQGAEQALSVSTLRLSFDLSAAREEGQELGGAALWQGGDLLVAQPVPAGAKVVPGSSRLGDRPLPDPTRSARGVLYWTVPLRDLPAGASELSYQVTHTQAARRAARRGAEPAW</sequence>
<reference key="1">
    <citation type="journal article" date="1999" name="Science">
        <title>Genome sequence of the radioresistant bacterium Deinococcus radiodurans R1.</title>
        <authorList>
            <person name="White O."/>
            <person name="Eisen J.A."/>
            <person name="Heidelberg J.F."/>
            <person name="Hickey E.K."/>
            <person name="Peterson J.D."/>
            <person name="Dodson R.J."/>
            <person name="Haft D.H."/>
            <person name="Gwinn M.L."/>
            <person name="Nelson W.C."/>
            <person name="Richardson D.L."/>
            <person name="Moffat K.S."/>
            <person name="Qin H."/>
            <person name="Jiang L."/>
            <person name="Pamphile W."/>
            <person name="Crosby M."/>
            <person name="Shen M."/>
            <person name="Vamathevan J.J."/>
            <person name="Lam P."/>
            <person name="McDonald L.A."/>
            <person name="Utterback T.R."/>
            <person name="Zalewski C."/>
            <person name="Makarova K.S."/>
            <person name="Aravind L."/>
            <person name="Daly M.J."/>
            <person name="Minton K.W."/>
            <person name="Fleischmann R.D."/>
            <person name="Ketchum K.A."/>
            <person name="Nelson K.E."/>
            <person name="Salzberg S.L."/>
            <person name="Smith H.O."/>
            <person name="Venter J.C."/>
            <person name="Fraser C.M."/>
        </authorList>
    </citation>
    <scope>NUCLEOTIDE SEQUENCE [LARGE SCALE GENOMIC DNA]</scope>
    <source>
        <strain>ATCC 13939 / DSM 20539 / JCM 16871 / CCUG 27074 / LMG 4051 / NBRC 15346 / NCIMB 9279 / VKM B-1422 / R1</strain>
    </source>
</reference>
<dbReference type="EMBL" id="AE001826">
    <property type="protein sequence ID" value="AAF12646.1"/>
    <property type="molecule type" value="Genomic_DNA"/>
</dbReference>
<dbReference type="PIR" id="E75622">
    <property type="entry name" value="E75622"/>
</dbReference>
<dbReference type="RefSeq" id="NP_051580.1">
    <property type="nucleotide sequence ID" value="NC_000958.1"/>
</dbReference>
<dbReference type="RefSeq" id="WP_010884062.1">
    <property type="nucleotide sequence ID" value="NC_000958.1"/>
</dbReference>
<dbReference type="EnsemblBacteria" id="AAF12646">
    <property type="protein sequence ID" value="AAF12646"/>
    <property type="gene ID" value="DR_B0040"/>
</dbReference>
<dbReference type="KEGG" id="dra:DR_B0040"/>
<dbReference type="PATRIC" id="fig|243230.17.peg.36"/>
<dbReference type="HOGENOM" id="CLU_1783704_0_0_0"/>
<dbReference type="InParanoid" id="Q9RZS4"/>
<dbReference type="Proteomes" id="UP000002524">
    <property type="component" value="Plasmid MP1"/>
</dbReference>
<accession>Q9RZS4</accession>
<organism>
    <name type="scientific">Deinococcus radiodurans (strain ATCC 13939 / DSM 20539 / JCM 16871 / CCUG 27074 / LMG 4051 / NBRC 15346 / NCIMB 9279 / VKM B-1422 / R1)</name>
    <dbReference type="NCBI Taxonomy" id="243230"/>
    <lineage>
        <taxon>Bacteria</taxon>
        <taxon>Thermotogati</taxon>
        <taxon>Deinococcota</taxon>
        <taxon>Deinococci</taxon>
        <taxon>Deinococcales</taxon>
        <taxon>Deinococcaceae</taxon>
        <taxon>Deinococcus</taxon>
    </lineage>
</organism>
<name>Y3140_DEIRA</name>
<protein>
    <recommendedName>
        <fullName>Uncharacterized protein DR_B0040</fullName>
    </recommendedName>
</protein>
<keyword id="KW-0614">Plasmid</keyword>
<keyword id="KW-1185">Reference proteome</keyword>
<proteinExistence type="predicted"/>
<geneLocation type="plasmid">
    <name>megaplasmid MP1</name>
</geneLocation>